<organism>
    <name type="scientific">Desulfocurvibacter africanus</name>
    <name type="common">Desulfovibrio africanus</name>
    <dbReference type="NCBI Taxonomy" id="873"/>
    <lineage>
        <taxon>Bacteria</taxon>
        <taxon>Pseudomonadati</taxon>
        <taxon>Thermodesulfobacteriota</taxon>
        <taxon>Desulfovibrionia</taxon>
        <taxon>Desulfovibrionales</taxon>
        <taxon>Desulfovibrionaceae</taxon>
        <taxon>Desulfocurvibacter</taxon>
    </lineage>
</organism>
<reference key="1">
    <citation type="journal article" date="1987" name="Biochim. Biophys. Acta">
        <title>Amino-acid sequence of Desulfovibrio africanus ferredoxin III: a unique structural feature for accommodating iron-sulfur clusters.</title>
        <authorList>
            <person name="Bovier-Lapierre G.E."/>
            <person name="Bruschi M."/>
            <person name="Bonicel J.J."/>
            <person name="Hatchikian E.C."/>
        </authorList>
    </citation>
    <scope>PROTEIN SEQUENCE</scope>
    <source>
        <strain>ATCC 19996 / DSM 2603 / NCIMB 8401 / Benghazi</strain>
    </source>
</reference>
<proteinExistence type="evidence at protein level"/>
<evidence type="ECO:0000250" key="1">
    <source>
        <dbReference type="UniProtKB" id="P49949"/>
    </source>
</evidence>
<evidence type="ECO:0000255" key="2">
    <source>
        <dbReference type="PROSITE-ProRule" id="PRU00711"/>
    </source>
</evidence>
<sequence length="61" mass="6577">GYKITIDTDKCTGDGECVDVCPVEVYELQDGKAVAVNEDECLGCESCVEVCEQDALTVEEN</sequence>
<keyword id="KW-0003">3Fe-4S</keyword>
<keyword id="KW-0004">4Fe-4S</keyword>
<keyword id="KW-0903">Direct protein sequencing</keyword>
<keyword id="KW-0249">Electron transport</keyword>
<keyword id="KW-0408">Iron</keyword>
<keyword id="KW-0411">Iron-sulfur</keyword>
<keyword id="KW-0479">Metal-binding</keyword>
<keyword id="KW-0677">Repeat</keyword>
<keyword id="KW-0813">Transport</keyword>
<feature type="chain" id="PRO_0000159158" description="Ferredoxin-3">
    <location>
        <begin position="1"/>
        <end position="61"/>
    </location>
</feature>
<feature type="domain" description="4Fe-4S ferredoxin-type 1" evidence="2">
    <location>
        <begin position="2"/>
        <end position="31"/>
    </location>
</feature>
<feature type="domain" description="4Fe-4S ferredoxin-type 2" evidence="2">
    <location>
        <begin position="32"/>
        <end position="61"/>
    </location>
</feature>
<feature type="binding site" evidence="1">
    <location>
        <position position="11"/>
    </location>
    <ligand>
        <name>[3Fe-4S] cluster</name>
        <dbReference type="ChEBI" id="CHEBI:21137"/>
    </ligand>
</feature>
<feature type="binding site" evidence="1">
    <location>
        <position position="17"/>
    </location>
    <ligand>
        <name>[3Fe-4S] cluster</name>
        <dbReference type="ChEBI" id="CHEBI:21137"/>
    </ligand>
</feature>
<feature type="binding site" evidence="1">
    <location>
        <position position="21"/>
    </location>
    <ligand>
        <name>[4Fe-4S] cluster</name>
        <dbReference type="ChEBI" id="CHEBI:49883"/>
    </ligand>
</feature>
<feature type="binding site" evidence="1">
    <location>
        <position position="41"/>
    </location>
    <ligand>
        <name>[4Fe-4S] cluster</name>
        <dbReference type="ChEBI" id="CHEBI:49883"/>
    </ligand>
</feature>
<feature type="binding site" evidence="1">
    <location>
        <position position="44"/>
    </location>
    <ligand>
        <name>[4Fe-4S] cluster</name>
        <dbReference type="ChEBI" id="CHEBI:49883"/>
    </ligand>
</feature>
<feature type="binding site" evidence="1">
    <location>
        <position position="47"/>
    </location>
    <ligand>
        <name>[4Fe-4S] cluster</name>
        <dbReference type="ChEBI" id="CHEBI:49883"/>
    </ligand>
</feature>
<feature type="binding site" evidence="1">
    <location>
        <position position="51"/>
    </location>
    <ligand>
        <name>[3Fe-4S] cluster</name>
        <dbReference type="ChEBI" id="CHEBI:21137"/>
    </ligand>
</feature>
<accession>P08812</accession>
<comment type="function">
    <text>Ferredoxins are iron-sulfur proteins that transfer electrons in a wide variety of metabolic reactions.</text>
</comment>
<comment type="cofactor">
    <cofactor evidence="1">
        <name>[3Fe-4S] cluster</name>
        <dbReference type="ChEBI" id="CHEBI:21137"/>
    </cofactor>
    <text evidence="1">Binds 1 [3Fe-4S] cluster.</text>
</comment>
<comment type="cofactor">
    <cofactor evidence="1">
        <name>[4Fe-4S] cluster</name>
        <dbReference type="ChEBI" id="CHEBI:49883"/>
    </cofactor>
    <text evidence="1">Binds 1 [4Fe-4S] cluster.</text>
</comment>
<name>FER3_DESAF</name>
<dbReference type="PIR" id="S07149">
    <property type="entry name" value="FEDV3A"/>
</dbReference>
<dbReference type="SMR" id="P08812"/>
<dbReference type="GO" id="GO:0051538">
    <property type="term" value="F:3 iron, 4 sulfur cluster binding"/>
    <property type="evidence" value="ECO:0007669"/>
    <property type="project" value="UniProtKB-KW"/>
</dbReference>
<dbReference type="GO" id="GO:0051539">
    <property type="term" value="F:4 iron, 4 sulfur cluster binding"/>
    <property type="evidence" value="ECO:0007669"/>
    <property type="project" value="UniProtKB-KW"/>
</dbReference>
<dbReference type="GO" id="GO:0046872">
    <property type="term" value="F:metal ion binding"/>
    <property type="evidence" value="ECO:0007669"/>
    <property type="project" value="UniProtKB-KW"/>
</dbReference>
<dbReference type="Gene3D" id="3.30.70.20">
    <property type="match status" value="2"/>
</dbReference>
<dbReference type="InterPro" id="IPR017896">
    <property type="entry name" value="4Fe4S_Fe-S-bd"/>
</dbReference>
<dbReference type="InterPro" id="IPR017900">
    <property type="entry name" value="4Fe4S_Fe_S_CS"/>
</dbReference>
<dbReference type="InterPro" id="IPR050572">
    <property type="entry name" value="Fe-S_Ferredoxin"/>
</dbReference>
<dbReference type="PANTHER" id="PTHR43687">
    <property type="entry name" value="ADENYLYLSULFATE REDUCTASE, BETA SUBUNIT"/>
    <property type="match status" value="1"/>
</dbReference>
<dbReference type="PANTHER" id="PTHR43687:SF6">
    <property type="entry name" value="L-ASPARTATE SEMIALDEHYDE SULFURTRANSFERASE IRON-SULFUR SUBUNIT"/>
    <property type="match status" value="1"/>
</dbReference>
<dbReference type="Pfam" id="PF13237">
    <property type="entry name" value="Fer4_10"/>
    <property type="match status" value="1"/>
</dbReference>
<dbReference type="SUPFAM" id="SSF54862">
    <property type="entry name" value="4Fe-4S ferredoxins"/>
    <property type="match status" value="1"/>
</dbReference>
<dbReference type="PROSITE" id="PS00198">
    <property type="entry name" value="4FE4S_FER_1"/>
    <property type="match status" value="1"/>
</dbReference>
<dbReference type="PROSITE" id="PS51379">
    <property type="entry name" value="4FE4S_FER_2"/>
    <property type="match status" value="2"/>
</dbReference>
<protein>
    <recommendedName>
        <fullName>Ferredoxin-3</fullName>
    </recommendedName>
    <alternativeName>
        <fullName>Ferredoxin III</fullName>
    </alternativeName>
</protein>